<feature type="chain" id="PRO_0000326124" description="Uncharacterized protein C2orf80 homolog">
    <location>
        <begin position="1"/>
        <end position="231"/>
    </location>
</feature>
<feature type="region of interest" description="Disordered" evidence="1">
    <location>
        <begin position="153"/>
        <end position="206"/>
    </location>
</feature>
<feature type="compositionally biased region" description="Low complexity" evidence="1">
    <location>
        <begin position="166"/>
        <end position="179"/>
    </location>
</feature>
<feature type="compositionally biased region" description="Polar residues" evidence="1">
    <location>
        <begin position="192"/>
        <end position="206"/>
    </location>
</feature>
<proteinExistence type="evidence at transcript level"/>
<evidence type="ECO:0000256" key="1">
    <source>
        <dbReference type="SAM" id="MobiDB-lite"/>
    </source>
</evidence>
<keyword id="KW-1185">Reference proteome</keyword>
<dbReference type="EMBL" id="AK085417">
    <property type="protein sequence ID" value="BAC39444.1"/>
    <property type="molecule type" value="mRNA"/>
</dbReference>
<dbReference type="CCDS" id="CCDS15015.1"/>
<dbReference type="RefSeq" id="NP_001272810.1">
    <property type="nucleotide sequence ID" value="NM_001285881.1"/>
</dbReference>
<dbReference type="RefSeq" id="NP_001272811.1">
    <property type="nucleotide sequence ID" value="NM_001285882.1"/>
</dbReference>
<dbReference type="RefSeq" id="NP_780502.1">
    <property type="nucleotide sequence ID" value="NM_175293.4"/>
</dbReference>
<dbReference type="FunCoup" id="Q8C3M9">
    <property type="interactions" value="1"/>
</dbReference>
<dbReference type="STRING" id="10090.ENSMUSP00000056196"/>
<dbReference type="GlyGen" id="Q8C3M9">
    <property type="glycosylation" value="2 sites, 1 O-linked glycan (1 site)"/>
</dbReference>
<dbReference type="PaxDb" id="10090-ENSMUSP00000056196"/>
<dbReference type="DNASU" id="98303"/>
<dbReference type="Ensembl" id="ENSMUST00000050047.4">
    <property type="protein sequence ID" value="ENSMUSP00000056196.4"/>
    <property type="gene ID" value="ENSMUSG00000044816.11"/>
</dbReference>
<dbReference type="GeneID" id="98303"/>
<dbReference type="KEGG" id="mmu:98303"/>
<dbReference type="UCSC" id="uc007bhm.2">
    <property type="organism name" value="mouse"/>
</dbReference>
<dbReference type="AGR" id="MGI:2138198"/>
<dbReference type="MGI" id="MGI:2138198">
    <property type="gene designation" value="D630023F18Rik"/>
</dbReference>
<dbReference type="VEuPathDB" id="HostDB:ENSMUSG00000044816"/>
<dbReference type="eggNOG" id="ENOG502S0E2">
    <property type="taxonomic scope" value="Eukaryota"/>
</dbReference>
<dbReference type="GeneTree" id="ENSGT00390000004840"/>
<dbReference type="InParanoid" id="Q8C3M9"/>
<dbReference type="OMA" id="LDDMVHY"/>
<dbReference type="OrthoDB" id="9905607at2759"/>
<dbReference type="PhylomeDB" id="Q8C3M9"/>
<dbReference type="TreeFam" id="TF338259"/>
<dbReference type="BioGRID-ORCS" id="98303">
    <property type="hits" value="1 hit in 76 CRISPR screens"/>
</dbReference>
<dbReference type="PRO" id="PR:Q8C3M9"/>
<dbReference type="Proteomes" id="UP000000589">
    <property type="component" value="Chromosome 1"/>
</dbReference>
<dbReference type="RNAct" id="Q8C3M9">
    <property type="molecule type" value="protein"/>
</dbReference>
<dbReference type="Bgee" id="ENSMUSG00000044816">
    <property type="expression patterns" value="Expressed in right kidney and 90 other cell types or tissues"/>
</dbReference>
<dbReference type="ExpressionAtlas" id="Q8C3M9">
    <property type="expression patterns" value="baseline and differential"/>
</dbReference>
<dbReference type="InterPro" id="IPR038776">
    <property type="entry name" value="C2orf80"/>
</dbReference>
<dbReference type="PANTHER" id="PTHR36296:SF1">
    <property type="entry name" value="CHROMOSOME 2 OPEN READING FRAME 80"/>
    <property type="match status" value="1"/>
</dbReference>
<dbReference type="PANTHER" id="PTHR36296">
    <property type="entry name" value="GAMMA-CRYSTALLIN A"/>
    <property type="match status" value="1"/>
</dbReference>
<dbReference type="Pfam" id="PF17718">
    <property type="entry name" value="DUF5563"/>
    <property type="match status" value="1"/>
</dbReference>
<organism>
    <name type="scientific">Mus musculus</name>
    <name type="common">Mouse</name>
    <dbReference type="NCBI Taxonomy" id="10090"/>
    <lineage>
        <taxon>Eukaryota</taxon>
        <taxon>Metazoa</taxon>
        <taxon>Chordata</taxon>
        <taxon>Craniata</taxon>
        <taxon>Vertebrata</taxon>
        <taxon>Euteleostomi</taxon>
        <taxon>Mammalia</taxon>
        <taxon>Eutheria</taxon>
        <taxon>Euarchontoglires</taxon>
        <taxon>Glires</taxon>
        <taxon>Rodentia</taxon>
        <taxon>Myomorpha</taxon>
        <taxon>Muroidea</taxon>
        <taxon>Muridae</taxon>
        <taxon>Murinae</taxon>
        <taxon>Mus</taxon>
        <taxon>Mus</taxon>
    </lineage>
</organism>
<sequence>MERRLVKQEVKRLLGEYIGIRLRENEFDPKGRGQLTFLDDMVNQVTLAHYDLAISVASQWLDCSENLTWLQWEKVRAPLHVRPAYPNRKEREAMILSSYAGVLMNSIPIEEVLKIYGANSSASPDSTKVAQALLPRRSLHPFAMLTAPRAAECNRRQSVKLRRGATNKNTTSSSTKKATGQNGDPVGKGTHTPATNISPTPVLSSAQPFHSSTVMWRNLESAQRQMGLEGK</sequence>
<accession>Q8C3M9</accession>
<name>CB080_MOUSE</name>
<reference key="1">
    <citation type="journal article" date="2005" name="Science">
        <title>The transcriptional landscape of the mammalian genome.</title>
        <authorList>
            <person name="Carninci P."/>
            <person name="Kasukawa T."/>
            <person name="Katayama S."/>
            <person name="Gough J."/>
            <person name="Frith M.C."/>
            <person name="Maeda N."/>
            <person name="Oyama R."/>
            <person name="Ravasi T."/>
            <person name="Lenhard B."/>
            <person name="Wells C."/>
            <person name="Kodzius R."/>
            <person name="Shimokawa K."/>
            <person name="Bajic V.B."/>
            <person name="Brenner S.E."/>
            <person name="Batalov S."/>
            <person name="Forrest A.R."/>
            <person name="Zavolan M."/>
            <person name="Davis M.J."/>
            <person name="Wilming L.G."/>
            <person name="Aidinis V."/>
            <person name="Allen J.E."/>
            <person name="Ambesi-Impiombato A."/>
            <person name="Apweiler R."/>
            <person name="Aturaliya R.N."/>
            <person name="Bailey T.L."/>
            <person name="Bansal M."/>
            <person name="Baxter L."/>
            <person name="Beisel K.W."/>
            <person name="Bersano T."/>
            <person name="Bono H."/>
            <person name="Chalk A.M."/>
            <person name="Chiu K.P."/>
            <person name="Choudhary V."/>
            <person name="Christoffels A."/>
            <person name="Clutterbuck D.R."/>
            <person name="Crowe M.L."/>
            <person name="Dalla E."/>
            <person name="Dalrymple B.P."/>
            <person name="de Bono B."/>
            <person name="Della Gatta G."/>
            <person name="di Bernardo D."/>
            <person name="Down T."/>
            <person name="Engstrom P."/>
            <person name="Fagiolini M."/>
            <person name="Faulkner G."/>
            <person name="Fletcher C.F."/>
            <person name="Fukushima T."/>
            <person name="Furuno M."/>
            <person name="Futaki S."/>
            <person name="Gariboldi M."/>
            <person name="Georgii-Hemming P."/>
            <person name="Gingeras T.R."/>
            <person name="Gojobori T."/>
            <person name="Green R.E."/>
            <person name="Gustincich S."/>
            <person name="Harbers M."/>
            <person name="Hayashi Y."/>
            <person name="Hensch T.K."/>
            <person name="Hirokawa N."/>
            <person name="Hill D."/>
            <person name="Huminiecki L."/>
            <person name="Iacono M."/>
            <person name="Ikeo K."/>
            <person name="Iwama A."/>
            <person name="Ishikawa T."/>
            <person name="Jakt M."/>
            <person name="Kanapin A."/>
            <person name="Katoh M."/>
            <person name="Kawasawa Y."/>
            <person name="Kelso J."/>
            <person name="Kitamura H."/>
            <person name="Kitano H."/>
            <person name="Kollias G."/>
            <person name="Krishnan S.P."/>
            <person name="Kruger A."/>
            <person name="Kummerfeld S.K."/>
            <person name="Kurochkin I.V."/>
            <person name="Lareau L.F."/>
            <person name="Lazarevic D."/>
            <person name="Lipovich L."/>
            <person name="Liu J."/>
            <person name="Liuni S."/>
            <person name="McWilliam S."/>
            <person name="Madan Babu M."/>
            <person name="Madera M."/>
            <person name="Marchionni L."/>
            <person name="Matsuda H."/>
            <person name="Matsuzawa S."/>
            <person name="Miki H."/>
            <person name="Mignone F."/>
            <person name="Miyake S."/>
            <person name="Morris K."/>
            <person name="Mottagui-Tabar S."/>
            <person name="Mulder N."/>
            <person name="Nakano N."/>
            <person name="Nakauchi H."/>
            <person name="Ng P."/>
            <person name="Nilsson R."/>
            <person name="Nishiguchi S."/>
            <person name="Nishikawa S."/>
            <person name="Nori F."/>
            <person name="Ohara O."/>
            <person name="Okazaki Y."/>
            <person name="Orlando V."/>
            <person name="Pang K.C."/>
            <person name="Pavan W.J."/>
            <person name="Pavesi G."/>
            <person name="Pesole G."/>
            <person name="Petrovsky N."/>
            <person name="Piazza S."/>
            <person name="Reed J."/>
            <person name="Reid J.F."/>
            <person name="Ring B.Z."/>
            <person name="Ringwald M."/>
            <person name="Rost B."/>
            <person name="Ruan Y."/>
            <person name="Salzberg S.L."/>
            <person name="Sandelin A."/>
            <person name="Schneider C."/>
            <person name="Schoenbach C."/>
            <person name="Sekiguchi K."/>
            <person name="Semple C.A."/>
            <person name="Seno S."/>
            <person name="Sessa L."/>
            <person name="Sheng Y."/>
            <person name="Shibata Y."/>
            <person name="Shimada H."/>
            <person name="Shimada K."/>
            <person name="Silva D."/>
            <person name="Sinclair B."/>
            <person name="Sperling S."/>
            <person name="Stupka E."/>
            <person name="Sugiura K."/>
            <person name="Sultana R."/>
            <person name="Takenaka Y."/>
            <person name="Taki K."/>
            <person name="Tammoja K."/>
            <person name="Tan S.L."/>
            <person name="Tang S."/>
            <person name="Taylor M.S."/>
            <person name="Tegner J."/>
            <person name="Teichmann S.A."/>
            <person name="Ueda H.R."/>
            <person name="van Nimwegen E."/>
            <person name="Verardo R."/>
            <person name="Wei C.L."/>
            <person name="Yagi K."/>
            <person name="Yamanishi H."/>
            <person name="Zabarovsky E."/>
            <person name="Zhu S."/>
            <person name="Zimmer A."/>
            <person name="Hide W."/>
            <person name="Bult C."/>
            <person name="Grimmond S.M."/>
            <person name="Teasdale R.D."/>
            <person name="Liu E.T."/>
            <person name="Brusic V."/>
            <person name="Quackenbush J."/>
            <person name="Wahlestedt C."/>
            <person name="Mattick J.S."/>
            <person name="Hume D.A."/>
            <person name="Kai C."/>
            <person name="Sasaki D."/>
            <person name="Tomaru Y."/>
            <person name="Fukuda S."/>
            <person name="Kanamori-Katayama M."/>
            <person name="Suzuki M."/>
            <person name="Aoki J."/>
            <person name="Arakawa T."/>
            <person name="Iida J."/>
            <person name="Imamura K."/>
            <person name="Itoh M."/>
            <person name="Kato T."/>
            <person name="Kawaji H."/>
            <person name="Kawagashira N."/>
            <person name="Kawashima T."/>
            <person name="Kojima M."/>
            <person name="Kondo S."/>
            <person name="Konno H."/>
            <person name="Nakano K."/>
            <person name="Ninomiya N."/>
            <person name="Nishio T."/>
            <person name="Okada M."/>
            <person name="Plessy C."/>
            <person name="Shibata K."/>
            <person name="Shiraki T."/>
            <person name="Suzuki S."/>
            <person name="Tagami M."/>
            <person name="Waki K."/>
            <person name="Watahiki A."/>
            <person name="Okamura-Oho Y."/>
            <person name="Suzuki H."/>
            <person name="Kawai J."/>
            <person name="Hayashizaki Y."/>
        </authorList>
    </citation>
    <scope>NUCLEOTIDE SEQUENCE [LARGE SCALE MRNA]</scope>
    <source>
        <strain>C57BL/6J</strain>
        <tissue>Kidney</tissue>
    </source>
</reference>
<protein>
    <recommendedName>
        <fullName>Uncharacterized protein C2orf80 homolog</fullName>
    </recommendedName>
</protein>